<organism>
    <name type="scientific">Bacillus thuringiensis subsp. konkukian (strain 97-27)</name>
    <dbReference type="NCBI Taxonomy" id="281309"/>
    <lineage>
        <taxon>Bacteria</taxon>
        <taxon>Bacillati</taxon>
        <taxon>Bacillota</taxon>
        <taxon>Bacilli</taxon>
        <taxon>Bacillales</taxon>
        <taxon>Bacillaceae</taxon>
        <taxon>Bacillus</taxon>
        <taxon>Bacillus cereus group</taxon>
    </lineage>
</organism>
<dbReference type="EMBL" id="AE017355">
    <property type="protein sequence ID" value="AAT61346.1"/>
    <property type="molecule type" value="Genomic_DNA"/>
</dbReference>
<dbReference type="RefSeq" id="WP_000786062.1">
    <property type="nucleotide sequence ID" value="NC_005957.1"/>
</dbReference>
<dbReference type="RefSeq" id="YP_037911.1">
    <property type="nucleotide sequence ID" value="NC_005957.1"/>
</dbReference>
<dbReference type="SMR" id="Q6HEW5"/>
<dbReference type="GeneID" id="93007262"/>
<dbReference type="KEGG" id="btk:BT9727_3591"/>
<dbReference type="PATRIC" id="fig|281309.8.peg.3829"/>
<dbReference type="HOGENOM" id="CLU_108696_5_3_9"/>
<dbReference type="UniPathway" id="UPA00094"/>
<dbReference type="PRO" id="PR:Q6HEW5"/>
<dbReference type="Proteomes" id="UP000001301">
    <property type="component" value="Chromosome"/>
</dbReference>
<dbReference type="GO" id="GO:0005829">
    <property type="term" value="C:cytosol"/>
    <property type="evidence" value="ECO:0007669"/>
    <property type="project" value="TreeGrafter"/>
</dbReference>
<dbReference type="GO" id="GO:0016020">
    <property type="term" value="C:membrane"/>
    <property type="evidence" value="ECO:0007669"/>
    <property type="project" value="GOC"/>
</dbReference>
<dbReference type="GO" id="GO:0000035">
    <property type="term" value="F:acyl binding"/>
    <property type="evidence" value="ECO:0007669"/>
    <property type="project" value="TreeGrafter"/>
</dbReference>
<dbReference type="GO" id="GO:0000036">
    <property type="term" value="F:acyl carrier activity"/>
    <property type="evidence" value="ECO:0007669"/>
    <property type="project" value="UniProtKB-UniRule"/>
</dbReference>
<dbReference type="GO" id="GO:0009245">
    <property type="term" value="P:lipid A biosynthetic process"/>
    <property type="evidence" value="ECO:0007669"/>
    <property type="project" value="TreeGrafter"/>
</dbReference>
<dbReference type="FunFam" id="1.10.1200.10:FF:000001">
    <property type="entry name" value="Acyl carrier protein"/>
    <property type="match status" value="1"/>
</dbReference>
<dbReference type="Gene3D" id="1.10.1200.10">
    <property type="entry name" value="ACP-like"/>
    <property type="match status" value="1"/>
</dbReference>
<dbReference type="HAMAP" id="MF_01217">
    <property type="entry name" value="Acyl_carrier"/>
    <property type="match status" value="1"/>
</dbReference>
<dbReference type="InterPro" id="IPR003231">
    <property type="entry name" value="ACP"/>
</dbReference>
<dbReference type="InterPro" id="IPR036736">
    <property type="entry name" value="ACP-like_sf"/>
</dbReference>
<dbReference type="InterPro" id="IPR009081">
    <property type="entry name" value="PP-bd_ACP"/>
</dbReference>
<dbReference type="InterPro" id="IPR006162">
    <property type="entry name" value="Ppantetheine_attach_site"/>
</dbReference>
<dbReference type="NCBIfam" id="TIGR00517">
    <property type="entry name" value="acyl_carrier"/>
    <property type="match status" value="1"/>
</dbReference>
<dbReference type="NCBIfam" id="NF002148">
    <property type="entry name" value="PRK00982.1-2"/>
    <property type="match status" value="1"/>
</dbReference>
<dbReference type="NCBIfam" id="NF002149">
    <property type="entry name" value="PRK00982.1-3"/>
    <property type="match status" value="1"/>
</dbReference>
<dbReference type="NCBIfam" id="NF002150">
    <property type="entry name" value="PRK00982.1-4"/>
    <property type="match status" value="1"/>
</dbReference>
<dbReference type="NCBIfam" id="NF002151">
    <property type="entry name" value="PRK00982.1-5"/>
    <property type="match status" value="1"/>
</dbReference>
<dbReference type="PANTHER" id="PTHR20863">
    <property type="entry name" value="ACYL CARRIER PROTEIN"/>
    <property type="match status" value="1"/>
</dbReference>
<dbReference type="PANTHER" id="PTHR20863:SF76">
    <property type="entry name" value="CARRIER DOMAIN-CONTAINING PROTEIN"/>
    <property type="match status" value="1"/>
</dbReference>
<dbReference type="Pfam" id="PF00550">
    <property type="entry name" value="PP-binding"/>
    <property type="match status" value="1"/>
</dbReference>
<dbReference type="SUPFAM" id="SSF47336">
    <property type="entry name" value="ACP-like"/>
    <property type="match status" value="1"/>
</dbReference>
<dbReference type="PROSITE" id="PS50075">
    <property type="entry name" value="CARRIER"/>
    <property type="match status" value="1"/>
</dbReference>
<dbReference type="PROSITE" id="PS00012">
    <property type="entry name" value="PHOSPHOPANTETHEINE"/>
    <property type="match status" value="1"/>
</dbReference>
<protein>
    <recommendedName>
        <fullName evidence="1">Acyl carrier protein</fullName>
        <shortName evidence="1">ACP</shortName>
    </recommendedName>
</protein>
<proteinExistence type="inferred from homology"/>
<accession>Q6HEW5</accession>
<gene>
    <name evidence="1" type="primary">acpP</name>
    <name type="synonym">acpA</name>
    <name type="ordered locus">BT9727_3591</name>
</gene>
<keyword id="KW-0963">Cytoplasm</keyword>
<keyword id="KW-0275">Fatty acid biosynthesis</keyword>
<keyword id="KW-0276">Fatty acid metabolism</keyword>
<keyword id="KW-0444">Lipid biosynthesis</keyword>
<keyword id="KW-0443">Lipid metabolism</keyword>
<keyword id="KW-0596">Phosphopantetheine</keyword>
<keyword id="KW-0597">Phosphoprotein</keyword>
<evidence type="ECO:0000255" key="1">
    <source>
        <dbReference type="HAMAP-Rule" id="MF_01217"/>
    </source>
</evidence>
<evidence type="ECO:0000255" key="2">
    <source>
        <dbReference type="PROSITE-ProRule" id="PRU00258"/>
    </source>
</evidence>
<comment type="function">
    <text evidence="1">Carrier of the growing fatty acid chain in fatty acid biosynthesis.</text>
</comment>
<comment type="pathway">
    <text evidence="1">Lipid metabolism; fatty acid biosynthesis.</text>
</comment>
<comment type="subcellular location">
    <subcellularLocation>
        <location evidence="1">Cytoplasm</location>
    </subcellularLocation>
</comment>
<comment type="PTM">
    <text evidence="1">4'-phosphopantetheine is transferred from CoA to a specific serine of apo-ACP by AcpS. This modification is essential for activity because fatty acids are bound in thioester linkage to the sulfhydryl of the prosthetic group.</text>
</comment>
<comment type="similarity">
    <text evidence="1">Belongs to the acyl carrier protein (ACP) family.</text>
</comment>
<feature type="chain" id="PRO_0000180102" description="Acyl carrier protein">
    <location>
        <begin position="1"/>
        <end position="77"/>
    </location>
</feature>
<feature type="domain" description="Carrier" evidence="2">
    <location>
        <begin position="2"/>
        <end position="77"/>
    </location>
</feature>
<feature type="modified residue" description="O-(pantetheine 4'-phosphoryl)serine" evidence="2">
    <location>
        <position position="37"/>
    </location>
</feature>
<reference key="1">
    <citation type="journal article" date="2006" name="J. Bacteriol.">
        <title>Pathogenomic sequence analysis of Bacillus cereus and Bacillus thuringiensis isolates closely related to Bacillus anthracis.</title>
        <authorList>
            <person name="Han C.S."/>
            <person name="Xie G."/>
            <person name="Challacombe J.F."/>
            <person name="Altherr M.R."/>
            <person name="Bhotika S.S."/>
            <person name="Bruce D."/>
            <person name="Campbell C.S."/>
            <person name="Campbell M.L."/>
            <person name="Chen J."/>
            <person name="Chertkov O."/>
            <person name="Cleland C."/>
            <person name="Dimitrijevic M."/>
            <person name="Doggett N.A."/>
            <person name="Fawcett J.J."/>
            <person name="Glavina T."/>
            <person name="Goodwin L.A."/>
            <person name="Hill K.K."/>
            <person name="Hitchcock P."/>
            <person name="Jackson P.J."/>
            <person name="Keim P."/>
            <person name="Kewalramani A.R."/>
            <person name="Longmire J."/>
            <person name="Lucas S."/>
            <person name="Malfatti S."/>
            <person name="McMurry K."/>
            <person name="Meincke L.J."/>
            <person name="Misra M."/>
            <person name="Moseman B.L."/>
            <person name="Mundt M."/>
            <person name="Munk A.C."/>
            <person name="Okinaka R.T."/>
            <person name="Parson-Quintana B."/>
            <person name="Reilly L.P."/>
            <person name="Richardson P."/>
            <person name="Robinson D.L."/>
            <person name="Rubin E."/>
            <person name="Saunders E."/>
            <person name="Tapia R."/>
            <person name="Tesmer J.G."/>
            <person name="Thayer N."/>
            <person name="Thompson L.S."/>
            <person name="Tice H."/>
            <person name="Ticknor L.O."/>
            <person name="Wills P.L."/>
            <person name="Brettin T.S."/>
            <person name="Gilna P."/>
        </authorList>
    </citation>
    <scope>NUCLEOTIDE SEQUENCE [LARGE SCALE GENOMIC DNA]</scope>
    <source>
        <strain>97-27</strain>
    </source>
</reference>
<sequence>MADVLERVTKIIVDRLGVEETEVVPAASFKEDLGADSLDVVELVMQLEDEFEMEISDEDAEKIATVGDAVTYIESHL</sequence>
<name>ACP_BACHK</name>